<gene>
    <name type="primary">KBTB1</name>
    <name type="ordered locus">A57R</name>
</gene>
<feature type="chain" id="PRO_0000396136" description="Kelch repeat and BTB domain-containing protein 1">
    <location>
        <begin position="1"/>
        <end position="564"/>
    </location>
</feature>
<feature type="domain" description="BTB" evidence="2">
    <location>
        <begin position="21"/>
        <end position="88"/>
    </location>
</feature>
<feature type="domain" description="BACK">
    <location>
        <begin position="123"/>
        <end position="219"/>
    </location>
</feature>
<feature type="repeat" description="Kelch 1">
    <location>
        <begin position="252"/>
        <end position="297"/>
    </location>
</feature>
<feature type="repeat" description="Kelch 2">
    <location>
        <begin position="298"/>
        <end position="346"/>
    </location>
</feature>
<feature type="repeat" description="Kelch 3">
    <location>
        <begin position="347"/>
        <end position="395"/>
    </location>
</feature>
<feature type="repeat" description="Kelch 4">
    <location>
        <begin position="397"/>
        <end position="441"/>
    </location>
</feature>
<feature type="repeat" description="Kelch 5">
    <location>
        <begin position="442"/>
        <end position="492"/>
    </location>
</feature>
<feature type="repeat" description="Kelch 6">
    <location>
        <begin position="494"/>
        <end position="539"/>
    </location>
</feature>
<evidence type="ECO:0000250" key="1"/>
<evidence type="ECO:0000255" key="2">
    <source>
        <dbReference type="PROSITE-ProRule" id="PRU00037"/>
    </source>
</evidence>
<dbReference type="EMBL" id="X94355">
    <property type="protein sequence ID" value="CAD90724.1"/>
    <property type="molecule type" value="Genomic_DNA"/>
</dbReference>
<dbReference type="SMR" id="O72736"/>
<dbReference type="Proteomes" id="UP000137384">
    <property type="component" value="Segment"/>
</dbReference>
<dbReference type="GO" id="GO:0030430">
    <property type="term" value="C:host cell cytoplasm"/>
    <property type="evidence" value="ECO:0007669"/>
    <property type="project" value="UniProtKB-SubCell"/>
</dbReference>
<dbReference type="GO" id="GO:0039648">
    <property type="term" value="P:symbiont-mediated perturbation of host ubiquitin-like protein modification"/>
    <property type="evidence" value="ECO:0007669"/>
    <property type="project" value="UniProtKB-KW"/>
</dbReference>
<dbReference type="Gene3D" id="1.25.40.420">
    <property type="match status" value="1"/>
</dbReference>
<dbReference type="Gene3D" id="2.120.10.80">
    <property type="entry name" value="Kelch-type beta propeller"/>
    <property type="match status" value="1"/>
</dbReference>
<dbReference type="Gene3D" id="3.30.710.10">
    <property type="entry name" value="Potassium Channel Kv1.1, Chain A"/>
    <property type="match status" value="1"/>
</dbReference>
<dbReference type="InterPro" id="IPR011705">
    <property type="entry name" value="BACK"/>
</dbReference>
<dbReference type="InterPro" id="IPR000210">
    <property type="entry name" value="BTB/POZ_dom"/>
</dbReference>
<dbReference type="InterPro" id="IPR015915">
    <property type="entry name" value="Kelch-typ_b-propeller"/>
</dbReference>
<dbReference type="InterPro" id="IPR006652">
    <property type="entry name" value="Kelch_1"/>
</dbReference>
<dbReference type="InterPro" id="IPR011333">
    <property type="entry name" value="SKP1/BTB/POZ_sf"/>
</dbReference>
<dbReference type="InterPro" id="IPR024182">
    <property type="entry name" value="Vaccinia_A55R"/>
</dbReference>
<dbReference type="PANTHER" id="PTHR45632:SF3">
    <property type="entry name" value="KELCH-LIKE PROTEIN 32"/>
    <property type="match status" value="1"/>
</dbReference>
<dbReference type="PANTHER" id="PTHR45632">
    <property type="entry name" value="LD33804P"/>
    <property type="match status" value="1"/>
</dbReference>
<dbReference type="Pfam" id="PF07707">
    <property type="entry name" value="BACK"/>
    <property type="match status" value="1"/>
</dbReference>
<dbReference type="Pfam" id="PF00651">
    <property type="entry name" value="BTB"/>
    <property type="match status" value="1"/>
</dbReference>
<dbReference type="Pfam" id="PF01344">
    <property type="entry name" value="Kelch_1"/>
    <property type="match status" value="3"/>
</dbReference>
<dbReference type="PIRSF" id="PIRSF003716">
    <property type="entry name" value="VAC_F3L"/>
    <property type="match status" value="1"/>
</dbReference>
<dbReference type="SMART" id="SM00875">
    <property type="entry name" value="BACK"/>
    <property type="match status" value="1"/>
</dbReference>
<dbReference type="SMART" id="SM00225">
    <property type="entry name" value="BTB"/>
    <property type="match status" value="1"/>
</dbReference>
<dbReference type="SMART" id="SM00612">
    <property type="entry name" value="Kelch"/>
    <property type="match status" value="5"/>
</dbReference>
<dbReference type="SUPFAM" id="SSF117281">
    <property type="entry name" value="Kelch motif"/>
    <property type="match status" value="1"/>
</dbReference>
<dbReference type="SUPFAM" id="SSF54695">
    <property type="entry name" value="POZ domain"/>
    <property type="match status" value="1"/>
</dbReference>
<dbReference type="PROSITE" id="PS50097">
    <property type="entry name" value="BTB"/>
    <property type="match status" value="1"/>
</dbReference>
<reference key="1">
    <citation type="submission" date="2003-03" db="EMBL/GenBank/DDBJ databases">
        <title>Structure-function and organization of cowpox virus strain GRI-90 complete genome.</title>
        <authorList>
            <person name="Shchelkunov S.N."/>
            <person name="Safronov P.F."/>
            <person name="Totmenin A.V."/>
            <person name="Miheev M.V."/>
            <person name="Ryazankina O.I."/>
            <person name="Petrov N.A."/>
            <person name="Gutorov V.V."/>
            <person name="Kotwal G.J."/>
            <person name="Sandakhchiev L.S."/>
        </authorList>
    </citation>
    <scope>NUCLEOTIDE SEQUENCE [LARGE SCALE GENOMIC DNA]</scope>
</reference>
<organism>
    <name type="scientific">Cowpox virus (strain GRI-90 / Grishak)</name>
    <name type="common">CPV</name>
    <dbReference type="NCBI Taxonomy" id="265871"/>
    <lineage>
        <taxon>Viruses</taxon>
        <taxon>Varidnaviria</taxon>
        <taxon>Bamfordvirae</taxon>
        <taxon>Nucleocytoviricota</taxon>
        <taxon>Pokkesviricetes</taxon>
        <taxon>Chitovirales</taxon>
        <taxon>Poxviridae</taxon>
        <taxon>Chordopoxvirinae</taxon>
        <taxon>Orthopoxvirus</taxon>
        <taxon>Cowpox virus</taxon>
    </lineage>
</organism>
<protein>
    <recommendedName>
        <fullName>Kelch repeat and BTB domain-containing protein 1</fullName>
    </recommendedName>
</protein>
<organismHost>
    <name type="scientific">Bos taurus</name>
    <name type="common">Bovine</name>
    <dbReference type="NCBI Taxonomy" id="9913"/>
</organismHost>
<organismHost>
    <name type="scientific">Felis catus</name>
    <name type="common">Cat</name>
    <name type="synonym">Felis silvestris catus</name>
    <dbReference type="NCBI Taxonomy" id="9685"/>
</organismHost>
<organismHost>
    <name type="scientific">Homo sapiens</name>
    <name type="common">Human</name>
    <dbReference type="NCBI Taxonomy" id="9606"/>
</organismHost>
<organismHost>
    <name type="scientific">Loxodonta africana</name>
    <name type="common">African elephant</name>
    <dbReference type="NCBI Taxonomy" id="9785"/>
</organismHost>
<organismHost>
    <name type="scientific">Microtus agrestis</name>
    <name type="common">Short-tailed field vole</name>
    <dbReference type="NCBI Taxonomy" id="29092"/>
</organismHost>
<organismHost>
    <name type="scientific">Mus musculus</name>
    <name type="common">Mouse</name>
    <dbReference type="NCBI Taxonomy" id="10090"/>
</organismHost>
<organismHost>
    <name type="scientific">Myodes glareolus</name>
    <name type="common">Bank vole</name>
    <name type="synonym">Clethrionomys glareolus</name>
    <dbReference type="NCBI Taxonomy" id="447135"/>
</organismHost>
<name>KBTB1_CWPXG</name>
<proteinExistence type="inferred from homology"/>
<keyword id="KW-1035">Host cytoplasm</keyword>
<keyword id="KW-0945">Host-virus interaction</keyword>
<keyword id="KW-0880">Kelch repeat</keyword>
<keyword id="KW-1123">Modulation of host E3 ubiquitin ligases by virus</keyword>
<keyword id="KW-1130">Modulation of host ubiquitin pathway by virus</keyword>
<keyword id="KW-0677">Repeat</keyword>
<keyword id="KW-0833">Ubl conjugation pathway</keyword>
<comment type="function">
    <text>Probable substrate-specific adapter of CUL3-containing E3 ubiquitin-protein ligases which mediate the ubiquitination and subsequent proteasomal degradation of host target proteins.</text>
</comment>
<comment type="subunit">
    <text evidence="1">Interacts (via BTB domain) with host CUL3.</text>
</comment>
<comment type="subcellular location">
    <subcellularLocation>
        <location evidence="1">Host cytoplasm</location>
    </subcellularLocation>
</comment>
<comment type="domain">
    <text evidence="1">The BTB domain is responsible for the interaction with CUL3 while the Kelch repeat domains supposely serve to recruit the cellular substrates.</text>
</comment>
<accession>O72736</accession>
<sequence>MNNSSELIAVINGFRNSGRFCDINIVINDERINAHRLILSGASEYFSILFSNNFIDSNEYEVNLSHLDYQSVNDLIDYIYGIPLSLTNDNVKYILSTADFLQIGSAITECEKYILKNLCSRNCIDFYIYADKYNNKKIESASFNTILRNILRLINDENFKYLTEESMIKILSDDMLNIKNEDFAPLILIKWLESTQQSCTVELLRCLRISLLSPQVIKSLYSHQLVSSIYECITFLNNIAFLDESFPRYHSIELISIGISNSHDKISINCYNHKKNTWEMISSRRYRCSFAVAVLDNIIYMMGGYDQSPYRSSKVIAYNTCTNSWIYDIPELKYPRSNCGGLADDEYIYCIGGIRDQDSSLTSSIDRWKPSKPYWQKYAKMREPKCDMGVAMLNGLIYVIGGIVKGDTCTDALESLSEDGWMKHQRLPIKMSNMSTIVHDGKIYISGGYNNSSVVNVISNLVLSYNPIYDEWTKLSSLNIPRINPALWSAHNKLYVGGGISDDVRTNTSETYDKEKDCWTLDNGHVLPRNYIMYKCEPIKHKYPLEKTQYTNDFLKYLESFIGS</sequence>